<sequence length="662" mass="74857">MSQSVSLTFPDGSVRSYDAGATGRDVAESISKSLAKKAVAIAIDGTVRDLSEPVADGKIEIITRNDDRALELIRHDAAHVMAEAVQELWPGTQVTIGPVIENGFYYDFAKNEPFTPDDLPVIEKKMREIIQRNKPFTRQIWSREKAKQVFADKGERYKVELVDAIPEGQDLKIYYQGDWFDLCRGPHMASTGQIGTAFKLMKVAGAYWRGDSNNPMLTRIYGTAFAEQADLDNYLHILAEAEKRDHRRLGREMDLFHFQEEGPGVVFWHGKGWRIFQTLVSYMRRRLEGDYQEVNAPQVLDKSLWETSGHWGWYRDNMFKVTVAGDDTDDDRVFALKPMNCPGHIQIFKHGLKSYRELPIRLAEFGNVHRYEPSGALHGLMRVRGFTQDDAHIFCTDEQMAAECLKINDLILSVYEDFGFEEVVVKLSTRPEKRVGDDALWDRAESVMMEVLKTIEAQSGGRIKTGILPGEGAFYGPKFEYTLKDAIGREWQCGTTQVDFNLPERFGAFYIDQHSEKTQPVMIHRAICGSMERFLGILIENFAGHMPLWVSPLQVVVATITSEADGYGEEVAEALRDAGLTVETDFRNEKINYKIREHSVTKVPVIIVCGKKEAEERSVNIRRLGSQAQTAMSLDEAIASLSLEATPPDVLRKREAKRAKVA</sequence>
<proteinExistence type="inferred from homology"/>
<reference key="1">
    <citation type="journal article" date="2009" name="J. Bacteriol.">
        <title>Genome sequences of three Agrobacterium biovars help elucidate the evolution of multichromosome genomes in bacteria.</title>
        <authorList>
            <person name="Slater S.C."/>
            <person name="Goldman B.S."/>
            <person name="Goodner B."/>
            <person name="Setubal J.C."/>
            <person name="Farrand S.K."/>
            <person name="Nester E.W."/>
            <person name="Burr T.J."/>
            <person name="Banta L."/>
            <person name="Dickerman A.W."/>
            <person name="Paulsen I."/>
            <person name="Otten L."/>
            <person name="Suen G."/>
            <person name="Welch R."/>
            <person name="Almeida N.F."/>
            <person name="Arnold F."/>
            <person name="Burton O.T."/>
            <person name="Du Z."/>
            <person name="Ewing A."/>
            <person name="Godsy E."/>
            <person name="Heisel S."/>
            <person name="Houmiel K.L."/>
            <person name="Jhaveri J."/>
            <person name="Lu J."/>
            <person name="Miller N.M."/>
            <person name="Norton S."/>
            <person name="Chen Q."/>
            <person name="Phoolcharoen W."/>
            <person name="Ohlin V."/>
            <person name="Ondrusek D."/>
            <person name="Pride N."/>
            <person name="Stricklin S.L."/>
            <person name="Sun J."/>
            <person name="Wheeler C."/>
            <person name="Wilson L."/>
            <person name="Zhu H."/>
            <person name="Wood D.W."/>
        </authorList>
    </citation>
    <scope>NUCLEOTIDE SEQUENCE [LARGE SCALE GENOMIC DNA]</scope>
    <source>
        <strain>K84 / ATCC BAA-868</strain>
    </source>
</reference>
<evidence type="ECO:0000255" key="1">
    <source>
        <dbReference type="HAMAP-Rule" id="MF_00184"/>
    </source>
</evidence>
<evidence type="ECO:0000255" key="2">
    <source>
        <dbReference type="PROSITE-ProRule" id="PRU01228"/>
    </source>
</evidence>
<comment type="function">
    <text evidence="1">Catalyzes the attachment of threonine to tRNA(Thr) in a two-step reaction: L-threonine is first activated by ATP to form Thr-AMP and then transferred to the acceptor end of tRNA(Thr). Also edits incorrectly charged L-seryl-tRNA(Thr).</text>
</comment>
<comment type="catalytic activity">
    <reaction evidence="1">
        <text>tRNA(Thr) + L-threonine + ATP = L-threonyl-tRNA(Thr) + AMP + diphosphate + H(+)</text>
        <dbReference type="Rhea" id="RHEA:24624"/>
        <dbReference type="Rhea" id="RHEA-COMP:9670"/>
        <dbReference type="Rhea" id="RHEA-COMP:9704"/>
        <dbReference type="ChEBI" id="CHEBI:15378"/>
        <dbReference type="ChEBI" id="CHEBI:30616"/>
        <dbReference type="ChEBI" id="CHEBI:33019"/>
        <dbReference type="ChEBI" id="CHEBI:57926"/>
        <dbReference type="ChEBI" id="CHEBI:78442"/>
        <dbReference type="ChEBI" id="CHEBI:78534"/>
        <dbReference type="ChEBI" id="CHEBI:456215"/>
        <dbReference type="EC" id="6.1.1.3"/>
    </reaction>
</comment>
<comment type="cofactor">
    <cofactor evidence="1">
        <name>Zn(2+)</name>
        <dbReference type="ChEBI" id="CHEBI:29105"/>
    </cofactor>
    <text evidence="1">Binds 1 zinc ion per subunit.</text>
</comment>
<comment type="subunit">
    <text evidence="1">Homodimer.</text>
</comment>
<comment type="subcellular location">
    <subcellularLocation>
        <location evidence="1">Cytoplasm</location>
    </subcellularLocation>
</comment>
<comment type="similarity">
    <text evidence="1">Belongs to the class-II aminoacyl-tRNA synthetase family.</text>
</comment>
<dbReference type="EC" id="6.1.1.3" evidence="1"/>
<dbReference type="EMBL" id="CP000628">
    <property type="protein sequence ID" value="ACM26654.1"/>
    <property type="molecule type" value="Genomic_DNA"/>
</dbReference>
<dbReference type="RefSeq" id="WP_007696141.1">
    <property type="nucleotide sequence ID" value="NC_011985.1"/>
</dbReference>
<dbReference type="SMR" id="B9JFG4"/>
<dbReference type="STRING" id="311403.Arad_2472"/>
<dbReference type="KEGG" id="ara:Arad_2472"/>
<dbReference type="eggNOG" id="COG0441">
    <property type="taxonomic scope" value="Bacteria"/>
</dbReference>
<dbReference type="HOGENOM" id="CLU_008554_0_1_5"/>
<dbReference type="Proteomes" id="UP000001600">
    <property type="component" value="Chromosome 1"/>
</dbReference>
<dbReference type="GO" id="GO:0005829">
    <property type="term" value="C:cytosol"/>
    <property type="evidence" value="ECO:0007669"/>
    <property type="project" value="TreeGrafter"/>
</dbReference>
<dbReference type="GO" id="GO:0005524">
    <property type="term" value="F:ATP binding"/>
    <property type="evidence" value="ECO:0007669"/>
    <property type="project" value="UniProtKB-UniRule"/>
</dbReference>
<dbReference type="GO" id="GO:0046872">
    <property type="term" value="F:metal ion binding"/>
    <property type="evidence" value="ECO:0007669"/>
    <property type="project" value="UniProtKB-KW"/>
</dbReference>
<dbReference type="GO" id="GO:0004829">
    <property type="term" value="F:threonine-tRNA ligase activity"/>
    <property type="evidence" value="ECO:0007669"/>
    <property type="project" value="UniProtKB-UniRule"/>
</dbReference>
<dbReference type="GO" id="GO:0000049">
    <property type="term" value="F:tRNA binding"/>
    <property type="evidence" value="ECO:0007669"/>
    <property type="project" value="UniProtKB-KW"/>
</dbReference>
<dbReference type="GO" id="GO:0006435">
    <property type="term" value="P:threonyl-tRNA aminoacylation"/>
    <property type="evidence" value="ECO:0007669"/>
    <property type="project" value="UniProtKB-UniRule"/>
</dbReference>
<dbReference type="CDD" id="cd01667">
    <property type="entry name" value="TGS_ThrRS"/>
    <property type="match status" value="1"/>
</dbReference>
<dbReference type="CDD" id="cd00860">
    <property type="entry name" value="ThrRS_anticodon"/>
    <property type="match status" value="1"/>
</dbReference>
<dbReference type="CDD" id="cd00771">
    <property type="entry name" value="ThrRS_core"/>
    <property type="match status" value="1"/>
</dbReference>
<dbReference type="FunFam" id="3.30.54.20:FF:000002">
    <property type="entry name" value="Threonine--tRNA ligase"/>
    <property type="match status" value="1"/>
</dbReference>
<dbReference type="FunFam" id="3.30.930.10:FF:000002">
    <property type="entry name" value="Threonine--tRNA ligase"/>
    <property type="match status" value="1"/>
</dbReference>
<dbReference type="FunFam" id="3.40.50.800:FF:000001">
    <property type="entry name" value="Threonine--tRNA ligase"/>
    <property type="match status" value="1"/>
</dbReference>
<dbReference type="FunFam" id="3.30.980.10:FF:000005">
    <property type="entry name" value="Threonyl-tRNA synthetase, mitochondrial"/>
    <property type="match status" value="1"/>
</dbReference>
<dbReference type="Gene3D" id="3.10.20.30">
    <property type="match status" value="1"/>
</dbReference>
<dbReference type="Gene3D" id="3.30.54.20">
    <property type="match status" value="1"/>
</dbReference>
<dbReference type="Gene3D" id="3.40.50.800">
    <property type="entry name" value="Anticodon-binding domain"/>
    <property type="match status" value="1"/>
</dbReference>
<dbReference type="Gene3D" id="3.30.930.10">
    <property type="entry name" value="Bira Bifunctional Protein, Domain 2"/>
    <property type="match status" value="1"/>
</dbReference>
<dbReference type="Gene3D" id="3.30.980.10">
    <property type="entry name" value="Threonyl-trna Synthetase, Chain A, domain 2"/>
    <property type="match status" value="1"/>
</dbReference>
<dbReference type="HAMAP" id="MF_00184">
    <property type="entry name" value="Thr_tRNA_synth"/>
    <property type="match status" value="1"/>
</dbReference>
<dbReference type="InterPro" id="IPR002314">
    <property type="entry name" value="aa-tRNA-synt_IIb"/>
</dbReference>
<dbReference type="InterPro" id="IPR006195">
    <property type="entry name" value="aa-tRNA-synth_II"/>
</dbReference>
<dbReference type="InterPro" id="IPR045864">
    <property type="entry name" value="aa-tRNA-synth_II/BPL/LPL"/>
</dbReference>
<dbReference type="InterPro" id="IPR004154">
    <property type="entry name" value="Anticodon-bd"/>
</dbReference>
<dbReference type="InterPro" id="IPR036621">
    <property type="entry name" value="Anticodon-bd_dom_sf"/>
</dbReference>
<dbReference type="InterPro" id="IPR012675">
    <property type="entry name" value="Beta-grasp_dom_sf"/>
</dbReference>
<dbReference type="InterPro" id="IPR004095">
    <property type="entry name" value="TGS"/>
</dbReference>
<dbReference type="InterPro" id="IPR012676">
    <property type="entry name" value="TGS-like"/>
</dbReference>
<dbReference type="InterPro" id="IPR002320">
    <property type="entry name" value="Thr-tRNA-ligase_IIa"/>
</dbReference>
<dbReference type="InterPro" id="IPR018163">
    <property type="entry name" value="Thr/Ala-tRNA-synth_IIc_edit"/>
</dbReference>
<dbReference type="InterPro" id="IPR047246">
    <property type="entry name" value="ThrRS_anticodon"/>
</dbReference>
<dbReference type="InterPro" id="IPR033728">
    <property type="entry name" value="ThrRS_core"/>
</dbReference>
<dbReference type="InterPro" id="IPR012947">
    <property type="entry name" value="tRNA_SAD"/>
</dbReference>
<dbReference type="NCBIfam" id="TIGR00418">
    <property type="entry name" value="thrS"/>
    <property type="match status" value="1"/>
</dbReference>
<dbReference type="PANTHER" id="PTHR11451:SF44">
    <property type="entry name" value="THREONINE--TRNA LIGASE, CHLOROPLASTIC_MITOCHONDRIAL 2"/>
    <property type="match status" value="1"/>
</dbReference>
<dbReference type="PANTHER" id="PTHR11451">
    <property type="entry name" value="THREONINE-TRNA LIGASE"/>
    <property type="match status" value="1"/>
</dbReference>
<dbReference type="Pfam" id="PF03129">
    <property type="entry name" value="HGTP_anticodon"/>
    <property type="match status" value="1"/>
</dbReference>
<dbReference type="Pfam" id="PF02824">
    <property type="entry name" value="TGS"/>
    <property type="match status" value="1"/>
</dbReference>
<dbReference type="Pfam" id="PF00587">
    <property type="entry name" value="tRNA-synt_2b"/>
    <property type="match status" value="1"/>
</dbReference>
<dbReference type="Pfam" id="PF07973">
    <property type="entry name" value="tRNA_SAD"/>
    <property type="match status" value="1"/>
</dbReference>
<dbReference type="PRINTS" id="PR01047">
    <property type="entry name" value="TRNASYNTHTHR"/>
</dbReference>
<dbReference type="SMART" id="SM00863">
    <property type="entry name" value="tRNA_SAD"/>
    <property type="match status" value="1"/>
</dbReference>
<dbReference type="SUPFAM" id="SSF52954">
    <property type="entry name" value="Class II aaRS ABD-related"/>
    <property type="match status" value="1"/>
</dbReference>
<dbReference type="SUPFAM" id="SSF55681">
    <property type="entry name" value="Class II aaRS and biotin synthetases"/>
    <property type="match status" value="1"/>
</dbReference>
<dbReference type="SUPFAM" id="SSF81271">
    <property type="entry name" value="TGS-like"/>
    <property type="match status" value="1"/>
</dbReference>
<dbReference type="SUPFAM" id="SSF55186">
    <property type="entry name" value="ThrRS/AlaRS common domain"/>
    <property type="match status" value="1"/>
</dbReference>
<dbReference type="PROSITE" id="PS50862">
    <property type="entry name" value="AA_TRNA_LIGASE_II"/>
    <property type="match status" value="1"/>
</dbReference>
<dbReference type="PROSITE" id="PS51880">
    <property type="entry name" value="TGS"/>
    <property type="match status" value="1"/>
</dbReference>
<name>SYT_RHIR8</name>
<keyword id="KW-0030">Aminoacyl-tRNA synthetase</keyword>
<keyword id="KW-0067">ATP-binding</keyword>
<keyword id="KW-0963">Cytoplasm</keyword>
<keyword id="KW-0436">Ligase</keyword>
<keyword id="KW-0479">Metal-binding</keyword>
<keyword id="KW-0547">Nucleotide-binding</keyword>
<keyword id="KW-0648">Protein biosynthesis</keyword>
<keyword id="KW-0694">RNA-binding</keyword>
<keyword id="KW-0820">tRNA-binding</keyword>
<keyword id="KW-0862">Zinc</keyword>
<gene>
    <name evidence="1" type="primary">thrS</name>
    <name type="ordered locus">Arad_2472</name>
</gene>
<protein>
    <recommendedName>
        <fullName evidence="1">Threonine--tRNA ligase</fullName>
        <ecNumber evidence="1">6.1.1.3</ecNumber>
    </recommendedName>
    <alternativeName>
        <fullName evidence="1">Threonyl-tRNA synthetase</fullName>
        <shortName evidence="1">ThrRS</shortName>
    </alternativeName>
</protein>
<accession>B9JFG4</accession>
<feature type="chain" id="PRO_1000199522" description="Threonine--tRNA ligase">
    <location>
        <begin position="1"/>
        <end position="662"/>
    </location>
</feature>
<feature type="domain" description="TGS" evidence="2">
    <location>
        <begin position="1"/>
        <end position="64"/>
    </location>
</feature>
<feature type="region of interest" description="Catalytic" evidence="1">
    <location>
        <begin position="245"/>
        <end position="547"/>
    </location>
</feature>
<feature type="binding site" evidence="1">
    <location>
        <position position="341"/>
    </location>
    <ligand>
        <name>Zn(2+)</name>
        <dbReference type="ChEBI" id="CHEBI:29105"/>
    </ligand>
</feature>
<feature type="binding site" evidence="1">
    <location>
        <position position="392"/>
    </location>
    <ligand>
        <name>Zn(2+)</name>
        <dbReference type="ChEBI" id="CHEBI:29105"/>
    </ligand>
</feature>
<feature type="binding site" evidence="1">
    <location>
        <position position="524"/>
    </location>
    <ligand>
        <name>Zn(2+)</name>
        <dbReference type="ChEBI" id="CHEBI:29105"/>
    </ligand>
</feature>
<organism>
    <name type="scientific">Rhizobium rhizogenes (strain K84 / ATCC BAA-868)</name>
    <name type="common">Agrobacterium radiobacter</name>
    <dbReference type="NCBI Taxonomy" id="311403"/>
    <lineage>
        <taxon>Bacteria</taxon>
        <taxon>Pseudomonadati</taxon>
        <taxon>Pseudomonadota</taxon>
        <taxon>Alphaproteobacteria</taxon>
        <taxon>Hyphomicrobiales</taxon>
        <taxon>Rhizobiaceae</taxon>
        <taxon>Rhizobium/Agrobacterium group</taxon>
        <taxon>Rhizobium</taxon>
    </lineage>
</organism>